<proteinExistence type="evidence at protein level"/>
<feature type="signal peptide" evidence="3">
    <location>
        <begin position="1"/>
        <end position="21"/>
    </location>
</feature>
<feature type="chain" id="PRO_0000446878" description="Outer membrane porin C" evidence="3">
    <location>
        <begin position="22"/>
        <end position="375"/>
    </location>
</feature>
<feature type="topological domain" description="Periplasmic" evidence="5">
    <location>
        <begin position="22"/>
        <end position="33"/>
    </location>
</feature>
<feature type="transmembrane region" description="Beta stranded" evidence="1">
    <location>
        <begin position="34"/>
        <end position="42"/>
    </location>
</feature>
<feature type="topological domain" description="Extracellular" evidence="5">
    <location>
        <begin position="43"/>
        <end position="53"/>
    </location>
</feature>
<feature type="transmembrane region" description="Beta stranded" evidence="1">
    <location>
        <begin position="54"/>
        <end position="63"/>
    </location>
</feature>
<feature type="topological domain" description="Periplasmic" evidence="5">
    <location>
        <begin position="64"/>
        <end position="73"/>
    </location>
</feature>
<feature type="transmembrane region" description="Beta stranded" evidence="1">
    <location>
        <begin position="74"/>
        <end position="84"/>
    </location>
</feature>
<feature type="topological domain" description="Extracellular" evidence="5">
    <location>
        <begin position="85"/>
        <end position="91"/>
    </location>
</feature>
<feature type="transmembrane region" description="Beta stranded" evidence="1">
    <location>
        <begin position="92"/>
        <end position="101"/>
    </location>
</feature>
<feature type="topological domain" description="Periplasmic" evidence="5">
    <location>
        <begin position="102"/>
        <end position="106"/>
    </location>
</feature>
<feature type="transmembrane region" description="Beta stranded" evidence="1">
    <location>
        <begin position="107"/>
        <end position="115"/>
    </location>
</feature>
<feature type="topological domain" description="Extracellular" evidence="5">
    <location>
        <begin position="116"/>
        <end position="141"/>
    </location>
</feature>
<feature type="transmembrane region" description="Beta stranded" evidence="1">
    <location>
        <begin position="142"/>
        <end position="154"/>
    </location>
</feature>
<feature type="topological domain" description="Periplasmic" evidence="5">
    <location>
        <begin position="155"/>
        <end position="163"/>
    </location>
</feature>
<feature type="transmembrane region" description="Beta stranded" evidence="1">
    <location>
        <begin position="164"/>
        <end position="171"/>
    </location>
</feature>
<feature type="topological domain" description="Extracellular" evidence="6">
    <location>
        <begin position="172"/>
        <end position="204"/>
    </location>
</feature>
<feature type="transmembrane region" description="Beta stranded" evidence="1">
    <location>
        <begin position="205"/>
        <end position="211"/>
    </location>
</feature>
<feature type="topological domain" description="Periplasmic" evidence="5">
    <location>
        <begin position="212"/>
        <end position="215"/>
    </location>
</feature>
<feature type="transmembrane region" description="Beta stranded" evidence="1">
    <location>
        <begin position="216"/>
        <end position="223"/>
    </location>
</feature>
<feature type="topological domain" description="Extracellular" evidence="6">
    <location>
        <begin position="224"/>
        <end position="245"/>
    </location>
</feature>
<feature type="transmembrane region" description="Beta stranded" evidence="1">
    <location>
        <begin position="246"/>
        <end position="252"/>
    </location>
</feature>
<feature type="topological domain" description="Periplasmic" evidence="5">
    <location>
        <begin position="253"/>
        <end position="256"/>
    </location>
</feature>
<feature type="transmembrane region" description="Beta stranded" evidence="1">
    <location>
        <begin position="257"/>
        <end position="264"/>
    </location>
</feature>
<feature type="topological domain" description="Extracellular" evidence="5">
    <location>
        <begin position="265"/>
        <end position="273"/>
    </location>
</feature>
<feature type="transmembrane region" description="Beta stranded" evidence="1">
    <location>
        <begin position="274"/>
        <end position="290"/>
    </location>
</feature>
<feature type="topological domain" description="Periplasmic" evidence="5">
    <location>
        <begin position="291"/>
        <end position="295"/>
    </location>
</feature>
<feature type="transmembrane region" description="Beta stranded" evidence="1">
    <location>
        <begin position="296"/>
        <end position="303"/>
    </location>
</feature>
<feature type="topological domain" description="Extracellular" evidence="5">
    <location>
        <begin position="304"/>
        <end position="326"/>
    </location>
</feature>
<feature type="transmembrane region" description="Beta stranded" evidence="1">
    <location>
        <begin position="327"/>
        <end position="334"/>
    </location>
</feature>
<feature type="topological domain" description="Periplasmic" evidence="5">
    <location>
        <begin position="335"/>
        <end position="338"/>
    </location>
</feature>
<feature type="transmembrane region" description="Beta stranded" evidence="1">
    <location>
        <begin position="339"/>
        <end position="346"/>
    </location>
</feature>
<feature type="topological domain" description="Extracellular" evidence="5">
    <location>
        <begin position="347"/>
        <end position="366"/>
    </location>
</feature>
<feature type="transmembrane region" description="Beta stranded" evidence="1">
    <location>
        <begin position="367"/>
        <end position="374"/>
    </location>
</feature>
<feature type="topological domain" description="Periplasmic" evidence="5">
    <location>
        <position position="375"/>
    </location>
</feature>
<protein>
    <recommendedName>
        <fullName>Outer membrane porin C</fullName>
    </recommendedName>
    <alternativeName>
        <fullName>Outer membrane protein 1B</fullName>
    </alternativeName>
    <alternativeName>
        <fullName>Outer membrane protein C</fullName>
    </alternativeName>
    <alternativeName>
        <fullName>Porin OmpC</fullName>
    </alternativeName>
</protein>
<keyword id="KW-0998">Cell outer membrane</keyword>
<keyword id="KW-0406">Ion transport</keyword>
<keyword id="KW-0472">Membrane</keyword>
<keyword id="KW-0626">Porin</keyword>
<keyword id="KW-0732">Signal</keyword>
<keyword id="KW-0812">Transmembrane</keyword>
<keyword id="KW-1134">Transmembrane beta strand</keyword>
<keyword id="KW-0813">Transport</keyword>
<reference key="1">
    <citation type="journal article" date="2006" name="Mol. Microbiol.">
        <title>Role of pathogenicity island-associated integrases in the genome plasticity of uropathogenic Escherichia coli strain 536.</title>
        <authorList>
            <person name="Hochhut B."/>
            <person name="Wilde C."/>
            <person name="Balling G."/>
            <person name="Middendorf B."/>
            <person name="Dobrindt U."/>
            <person name="Brzuszkiewicz E."/>
            <person name="Gottschalk G."/>
            <person name="Carniel E."/>
            <person name="Hacker J."/>
        </authorList>
    </citation>
    <scope>NUCLEOTIDE SEQUENCE [LARGE SCALE GENOMIC DNA]</scope>
    <source>
        <strain>536 / UPEC</strain>
    </source>
</reference>
<reference key="2">
    <citation type="journal article" date="2016" name="PLoS Pathog.">
        <title>CdiA effectors from uropathogenic Escherichia coli use heterotrimeric osmoporins as receptors to recognize target bacteria.</title>
        <authorList>
            <person name="Beck C.M."/>
            <person name="Willett J.L."/>
            <person name="Cunningham D.A."/>
            <person name="Kim J.J."/>
            <person name="Low D.A."/>
            <person name="Hayes C.S."/>
        </authorList>
    </citation>
    <scope>FUNCTION (MICROBIAL INFECTION)</scope>
    <scope>SUBUNIT</scope>
    <source>
        <strain>K12</strain>
    </source>
</reference>
<name>OMPC_ECOL5</name>
<comment type="function">
    <text evidence="2">Forms pores that allow passive diffusion of small molecules across the outer membrane.</text>
</comment>
<comment type="function">
    <text evidence="4">(Microbial infection) Supports colicin E5 entry in the absence of its major receptor OmpF.</text>
</comment>
<comment type="function">
    <text evidence="4">(Microbial infection) A mixed OmpC-OmpF heterotrimer is the outer membrane receptor for toxin CdiA-EC536.</text>
</comment>
<comment type="subunit">
    <text evidence="4 6">Homotrimer (Probable). Forms mixed heterotrimers with OmpF; other mixed heterotrimers are also probable (PubMed:27723824).</text>
</comment>
<comment type="subcellular location">
    <subcellularLocation>
        <location evidence="6">Cell outer membrane</location>
        <topology>Multi-pass membrane protein</topology>
    </subcellularLocation>
</comment>
<comment type="similarity">
    <text evidence="5">Belongs to the Gram-negative porin family.</text>
</comment>
<gene>
    <name type="primary">ompC</name>
    <name type="ordered locus">ECP_2258</name>
</gene>
<evidence type="ECO:0000250" key="1">
    <source>
        <dbReference type="UniProtKB" id="P06996"/>
    </source>
</evidence>
<evidence type="ECO:0000250" key="2">
    <source>
        <dbReference type="UniProtKB" id="Q8CVW1"/>
    </source>
</evidence>
<evidence type="ECO:0000255" key="3"/>
<evidence type="ECO:0000269" key="4">
    <source>
    </source>
</evidence>
<evidence type="ECO:0000305" key="5"/>
<evidence type="ECO:0000305" key="6">
    <source>
    </source>
</evidence>
<sequence>MKVKVLSLLVPALLVAGAANAAEVYNKDGNKLDLYGKVDGLHYFSDDKSVDGDQTYMRLGFKGETQVTDQLTGYGQWEYQIQGNAPESENNSWTRVAFAGLKFQDIGSFDYGRNYGVVYDVTSWTDVLPEFGGDTYGSDNFMQQRGNGFATYRNTDFFGLVDGLNFAVQYQGQNGSVSGENDPDFTGHGITNNGRKALRQNGDGVGGSITYDYEGFGVGAAVSSSKRTDAQNTAAYIGNGDRAETYTGGLKYDANNIYLAAQYTQTYNATRVGSLGWANKAQNFEAVAQYQFDFGLRPSVAYLQSKGKNLGTIGTRNYDDEDILKYVDVGATYYFNKNMSTYVDYKINLLDDNQFTRDAGINTDNIVALGLVYQF</sequence>
<dbReference type="EMBL" id="CP000247">
    <property type="protein sequence ID" value="ABG70254.1"/>
    <property type="molecule type" value="Genomic_DNA"/>
</dbReference>
<dbReference type="RefSeq" id="WP_000865542.1">
    <property type="nucleotide sequence ID" value="NC_008253.1"/>
</dbReference>
<dbReference type="SMR" id="P0DQH0"/>
<dbReference type="KEGG" id="ecp:ECP_2258"/>
<dbReference type="Proteomes" id="UP000009182">
    <property type="component" value="Chromosome"/>
</dbReference>
<dbReference type="GO" id="GO:0009279">
    <property type="term" value="C:cell outer membrane"/>
    <property type="evidence" value="ECO:0007669"/>
    <property type="project" value="UniProtKB-SubCell"/>
</dbReference>
<dbReference type="GO" id="GO:0046930">
    <property type="term" value="C:pore complex"/>
    <property type="evidence" value="ECO:0007669"/>
    <property type="project" value="UniProtKB-KW"/>
</dbReference>
<dbReference type="GO" id="GO:0015288">
    <property type="term" value="F:porin activity"/>
    <property type="evidence" value="ECO:0007669"/>
    <property type="project" value="UniProtKB-KW"/>
</dbReference>
<dbReference type="GO" id="GO:0034220">
    <property type="term" value="P:monoatomic ion transmembrane transport"/>
    <property type="evidence" value="ECO:0007669"/>
    <property type="project" value="InterPro"/>
</dbReference>
<dbReference type="FunFam" id="2.40.160.10:FF:000002">
    <property type="entry name" value="Outer membrane porin F"/>
    <property type="match status" value="1"/>
</dbReference>
<dbReference type="Gene3D" id="2.40.160.10">
    <property type="entry name" value="Porin"/>
    <property type="match status" value="1"/>
</dbReference>
<dbReference type="InterPro" id="IPR050298">
    <property type="entry name" value="Gram-neg_bact_OMP"/>
</dbReference>
<dbReference type="InterPro" id="IPR023614">
    <property type="entry name" value="Porin_dom_sf"/>
</dbReference>
<dbReference type="InterPro" id="IPR001897">
    <property type="entry name" value="Porin_gammaproteobac"/>
</dbReference>
<dbReference type="InterPro" id="IPR001702">
    <property type="entry name" value="Porin_Gram-ve"/>
</dbReference>
<dbReference type="InterPro" id="IPR013793">
    <property type="entry name" value="Porin_Gram-ve_CS"/>
</dbReference>
<dbReference type="NCBIfam" id="NF007841">
    <property type="entry name" value="PRK10554.1"/>
    <property type="match status" value="1"/>
</dbReference>
<dbReference type="PANTHER" id="PTHR34501:SF1">
    <property type="entry name" value="OUTER MEMBRANE PORIN C"/>
    <property type="match status" value="1"/>
</dbReference>
<dbReference type="PANTHER" id="PTHR34501">
    <property type="entry name" value="PROTEIN YDDL-RELATED"/>
    <property type="match status" value="1"/>
</dbReference>
<dbReference type="Pfam" id="PF00267">
    <property type="entry name" value="Porin_1"/>
    <property type="match status" value="1"/>
</dbReference>
<dbReference type="PRINTS" id="PR00183">
    <property type="entry name" value="ECOLIPORIN"/>
</dbReference>
<dbReference type="PRINTS" id="PR00182">
    <property type="entry name" value="ECOLNEIPORIN"/>
</dbReference>
<dbReference type="SUPFAM" id="SSF56935">
    <property type="entry name" value="Porins"/>
    <property type="match status" value="1"/>
</dbReference>
<dbReference type="PROSITE" id="PS00576">
    <property type="entry name" value="GRAM_NEG_PORIN"/>
    <property type="match status" value="1"/>
</dbReference>
<organism>
    <name type="scientific">Escherichia coli O6:K15:H31 (strain 536 / UPEC)</name>
    <dbReference type="NCBI Taxonomy" id="362663"/>
    <lineage>
        <taxon>Bacteria</taxon>
        <taxon>Pseudomonadati</taxon>
        <taxon>Pseudomonadota</taxon>
        <taxon>Gammaproteobacteria</taxon>
        <taxon>Enterobacterales</taxon>
        <taxon>Enterobacteriaceae</taxon>
        <taxon>Escherichia</taxon>
    </lineage>
</organism>
<accession>P0DQH0</accession>
<accession>A0A454A607</accession>